<evidence type="ECO:0000255" key="1">
    <source>
        <dbReference type="HAMAP-Rule" id="MF_01569"/>
    </source>
</evidence>
<comment type="function">
    <text evidence="1">Catalyzes the attachment of proline to tRNA(Pro) in a two-step reaction: proline is first activated by ATP to form Pro-AMP and then transferred to the acceptor end of tRNA(Pro). As ProRS can inadvertently accommodate and process non-cognate amino acids such as alanine and cysteine, to avoid such errors it has two additional distinct editing activities against alanine. One activity is designated as 'pretransfer' editing and involves the tRNA(Pro)-independent hydrolysis of activated Ala-AMP. The other activity is designated 'posttransfer' editing and involves deacylation of mischarged Ala-tRNA(Pro). The misacylated Cys-tRNA(Pro) is not edited by ProRS.</text>
</comment>
<comment type="catalytic activity">
    <reaction evidence="1">
        <text>tRNA(Pro) + L-proline + ATP = L-prolyl-tRNA(Pro) + AMP + diphosphate</text>
        <dbReference type="Rhea" id="RHEA:14305"/>
        <dbReference type="Rhea" id="RHEA-COMP:9700"/>
        <dbReference type="Rhea" id="RHEA-COMP:9702"/>
        <dbReference type="ChEBI" id="CHEBI:30616"/>
        <dbReference type="ChEBI" id="CHEBI:33019"/>
        <dbReference type="ChEBI" id="CHEBI:60039"/>
        <dbReference type="ChEBI" id="CHEBI:78442"/>
        <dbReference type="ChEBI" id="CHEBI:78532"/>
        <dbReference type="ChEBI" id="CHEBI:456215"/>
        <dbReference type="EC" id="6.1.1.15"/>
    </reaction>
</comment>
<comment type="subunit">
    <text evidence="1">Homodimer.</text>
</comment>
<comment type="subcellular location">
    <subcellularLocation>
        <location evidence="1">Cytoplasm</location>
    </subcellularLocation>
</comment>
<comment type="domain">
    <text evidence="1">Consists of three domains: the N-terminal catalytic domain, the editing domain and the C-terminal anticodon-binding domain.</text>
</comment>
<comment type="similarity">
    <text evidence="1">Belongs to the class-II aminoacyl-tRNA synthetase family. ProS type 1 subfamily.</text>
</comment>
<protein>
    <recommendedName>
        <fullName evidence="1">Proline--tRNA ligase</fullName>
        <ecNumber evidence="1">6.1.1.15</ecNumber>
    </recommendedName>
    <alternativeName>
        <fullName evidence="1">Prolyl-tRNA synthetase</fullName>
        <shortName evidence="1">ProRS</shortName>
    </alternativeName>
</protein>
<keyword id="KW-0030">Aminoacyl-tRNA synthetase</keyword>
<keyword id="KW-0067">ATP-binding</keyword>
<keyword id="KW-0963">Cytoplasm</keyword>
<keyword id="KW-0436">Ligase</keyword>
<keyword id="KW-0547">Nucleotide-binding</keyword>
<keyword id="KW-0648">Protein biosynthesis</keyword>
<keyword id="KW-1185">Reference proteome</keyword>
<gene>
    <name evidence="1" type="primary">proS</name>
    <name type="ordered locus">DIP1482</name>
</gene>
<dbReference type="EC" id="6.1.1.15" evidence="1"/>
<dbReference type="EMBL" id="BX248358">
    <property type="protein sequence ID" value="CAE50010.1"/>
    <property type="molecule type" value="Genomic_DNA"/>
</dbReference>
<dbReference type="RefSeq" id="WP_010935097.1">
    <property type="nucleotide sequence ID" value="NC_002935.2"/>
</dbReference>
<dbReference type="SMR" id="Q6NGM7"/>
<dbReference type="STRING" id="257309.DIP1482"/>
<dbReference type="KEGG" id="cdi:DIP1482"/>
<dbReference type="HOGENOM" id="CLU_016739_0_0_11"/>
<dbReference type="Proteomes" id="UP000002198">
    <property type="component" value="Chromosome"/>
</dbReference>
<dbReference type="GO" id="GO:0005829">
    <property type="term" value="C:cytosol"/>
    <property type="evidence" value="ECO:0007669"/>
    <property type="project" value="TreeGrafter"/>
</dbReference>
<dbReference type="GO" id="GO:0002161">
    <property type="term" value="F:aminoacyl-tRNA deacylase activity"/>
    <property type="evidence" value="ECO:0007669"/>
    <property type="project" value="InterPro"/>
</dbReference>
<dbReference type="GO" id="GO:0005524">
    <property type="term" value="F:ATP binding"/>
    <property type="evidence" value="ECO:0007669"/>
    <property type="project" value="UniProtKB-UniRule"/>
</dbReference>
<dbReference type="GO" id="GO:0004827">
    <property type="term" value="F:proline-tRNA ligase activity"/>
    <property type="evidence" value="ECO:0007669"/>
    <property type="project" value="UniProtKB-UniRule"/>
</dbReference>
<dbReference type="GO" id="GO:0006433">
    <property type="term" value="P:prolyl-tRNA aminoacylation"/>
    <property type="evidence" value="ECO:0007669"/>
    <property type="project" value="UniProtKB-UniRule"/>
</dbReference>
<dbReference type="CDD" id="cd00861">
    <property type="entry name" value="ProRS_anticodon_short"/>
    <property type="match status" value="1"/>
</dbReference>
<dbReference type="CDD" id="cd00779">
    <property type="entry name" value="ProRS_core_prok"/>
    <property type="match status" value="1"/>
</dbReference>
<dbReference type="FunFam" id="3.30.930.10:FF:000065">
    <property type="entry name" value="Proline--tRNA ligase"/>
    <property type="match status" value="1"/>
</dbReference>
<dbReference type="FunFam" id="3.30.930.10:FF:000066">
    <property type="entry name" value="Proline--tRNA ligase"/>
    <property type="match status" value="1"/>
</dbReference>
<dbReference type="Gene3D" id="3.40.50.800">
    <property type="entry name" value="Anticodon-binding domain"/>
    <property type="match status" value="1"/>
</dbReference>
<dbReference type="Gene3D" id="3.30.930.10">
    <property type="entry name" value="Bira Bifunctional Protein, Domain 2"/>
    <property type="match status" value="2"/>
</dbReference>
<dbReference type="HAMAP" id="MF_01569">
    <property type="entry name" value="Pro_tRNA_synth_type1"/>
    <property type="match status" value="1"/>
</dbReference>
<dbReference type="InterPro" id="IPR002314">
    <property type="entry name" value="aa-tRNA-synt_IIb"/>
</dbReference>
<dbReference type="InterPro" id="IPR006195">
    <property type="entry name" value="aa-tRNA-synth_II"/>
</dbReference>
<dbReference type="InterPro" id="IPR045864">
    <property type="entry name" value="aa-tRNA-synth_II/BPL/LPL"/>
</dbReference>
<dbReference type="InterPro" id="IPR004154">
    <property type="entry name" value="Anticodon-bd"/>
</dbReference>
<dbReference type="InterPro" id="IPR036621">
    <property type="entry name" value="Anticodon-bd_dom_sf"/>
</dbReference>
<dbReference type="InterPro" id="IPR002316">
    <property type="entry name" value="Pro-tRNA-ligase_IIa"/>
</dbReference>
<dbReference type="InterPro" id="IPR004500">
    <property type="entry name" value="Pro-tRNA-synth_IIa_bac-type"/>
</dbReference>
<dbReference type="InterPro" id="IPR023717">
    <property type="entry name" value="Pro-tRNA-Synthase_IIa_type1"/>
</dbReference>
<dbReference type="InterPro" id="IPR050062">
    <property type="entry name" value="Pro-tRNA_synthetase"/>
</dbReference>
<dbReference type="InterPro" id="IPR044140">
    <property type="entry name" value="ProRS_anticodon_short"/>
</dbReference>
<dbReference type="InterPro" id="IPR033730">
    <property type="entry name" value="ProRS_core_prok"/>
</dbReference>
<dbReference type="InterPro" id="IPR036754">
    <property type="entry name" value="YbaK/aa-tRNA-synt-asso_dom_sf"/>
</dbReference>
<dbReference type="InterPro" id="IPR007214">
    <property type="entry name" value="YbaK/aa-tRNA-synth-assoc-dom"/>
</dbReference>
<dbReference type="NCBIfam" id="NF006625">
    <property type="entry name" value="PRK09194.1"/>
    <property type="match status" value="1"/>
</dbReference>
<dbReference type="NCBIfam" id="TIGR00409">
    <property type="entry name" value="proS_fam_II"/>
    <property type="match status" value="1"/>
</dbReference>
<dbReference type="PANTHER" id="PTHR42753">
    <property type="entry name" value="MITOCHONDRIAL RIBOSOME PROTEIN L39/PROLYL-TRNA LIGASE FAMILY MEMBER"/>
    <property type="match status" value="1"/>
</dbReference>
<dbReference type="PANTHER" id="PTHR42753:SF2">
    <property type="entry name" value="PROLINE--TRNA LIGASE"/>
    <property type="match status" value="1"/>
</dbReference>
<dbReference type="Pfam" id="PF03129">
    <property type="entry name" value="HGTP_anticodon"/>
    <property type="match status" value="1"/>
</dbReference>
<dbReference type="Pfam" id="PF00587">
    <property type="entry name" value="tRNA-synt_2b"/>
    <property type="match status" value="1"/>
</dbReference>
<dbReference type="Pfam" id="PF04073">
    <property type="entry name" value="tRNA_edit"/>
    <property type="match status" value="1"/>
</dbReference>
<dbReference type="PRINTS" id="PR01046">
    <property type="entry name" value="TRNASYNTHPRO"/>
</dbReference>
<dbReference type="SUPFAM" id="SSF52954">
    <property type="entry name" value="Class II aaRS ABD-related"/>
    <property type="match status" value="1"/>
</dbReference>
<dbReference type="SUPFAM" id="SSF55681">
    <property type="entry name" value="Class II aaRS and biotin synthetases"/>
    <property type="match status" value="1"/>
</dbReference>
<dbReference type="SUPFAM" id="SSF55826">
    <property type="entry name" value="YbaK/ProRS associated domain"/>
    <property type="match status" value="1"/>
</dbReference>
<dbReference type="PROSITE" id="PS50862">
    <property type="entry name" value="AA_TRNA_LIGASE_II"/>
    <property type="match status" value="1"/>
</dbReference>
<accession>Q6NGM7</accession>
<name>SYP_CORDI</name>
<feature type="chain" id="PRO_0000248676" description="Proline--tRNA ligase">
    <location>
        <begin position="1"/>
        <end position="585"/>
    </location>
</feature>
<sequence length="585" mass="64466">MITRLSTLFLRTLREDPADAEVPSHKLLVRAGYIRRTAPGVYTWLPLGLRTLRKVETVVREEMDAIGAQELLFPALLPREPYEQTHRWTEYGDSLFRLKDRKGGDYLLGPTHEEMFASAVKDMYSSYKDFPVTLYQIQTKYRDEERPRAGILRGREFVMKDSYSFDMSDAGLEDSYQRHREAYQRILDRLGVEYVICAATSGAMGGSASEEFLAVSDNGEDTFVRATEGPYAANVEAVVTQPGVERPLEQAPEAVEYETPNAETIEALVQWAQSAGVTVEDRSVAAADTLKCLLVKITQPGAEEAELAGILLPGDREVDMKRLEASVEPAEVELASEEDFKNNPFLVKGYVGPRALNAHGVKVLADPRVVSGTSWIAGADAVEHHVVGLTMGRDFTVDGYIEAAEIREGDPAPEGQGTLTLARGIEVGHIFQLGRKYTEAFDVQILDESGKRAIPTMGSYGIGVSRLMAVLAEQRHDETGLNWPLEVAPYQVHVVVANKDKEAIEAGDALVAALDSHGIEVLFDDRPKVSPGVKFKDAELLGMPFVVVLGRAFKDGNIELRERGQETVLVSADEIVDTVVAKLNR</sequence>
<reference key="1">
    <citation type="journal article" date="2003" name="Nucleic Acids Res.">
        <title>The complete genome sequence and analysis of Corynebacterium diphtheriae NCTC13129.</title>
        <authorList>
            <person name="Cerdeno-Tarraga A.-M."/>
            <person name="Efstratiou A."/>
            <person name="Dover L.G."/>
            <person name="Holden M.T.G."/>
            <person name="Pallen M.J."/>
            <person name="Bentley S.D."/>
            <person name="Besra G.S."/>
            <person name="Churcher C.M."/>
            <person name="James K.D."/>
            <person name="De Zoysa A."/>
            <person name="Chillingworth T."/>
            <person name="Cronin A."/>
            <person name="Dowd L."/>
            <person name="Feltwell T."/>
            <person name="Hamlin N."/>
            <person name="Holroyd S."/>
            <person name="Jagels K."/>
            <person name="Moule S."/>
            <person name="Quail M.A."/>
            <person name="Rabbinowitsch E."/>
            <person name="Rutherford K.M."/>
            <person name="Thomson N.R."/>
            <person name="Unwin L."/>
            <person name="Whitehead S."/>
            <person name="Barrell B.G."/>
            <person name="Parkhill J."/>
        </authorList>
    </citation>
    <scope>NUCLEOTIDE SEQUENCE [LARGE SCALE GENOMIC DNA]</scope>
    <source>
        <strain>ATCC 700971 / NCTC 13129 / Biotype gravis</strain>
    </source>
</reference>
<proteinExistence type="inferred from homology"/>
<organism>
    <name type="scientific">Corynebacterium diphtheriae (strain ATCC 700971 / NCTC 13129 / Biotype gravis)</name>
    <dbReference type="NCBI Taxonomy" id="257309"/>
    <lineage>
        <taxon>Bacteria</taxon>
        <taxon>Bacillati</taxon>
        <taxon>Actinomycetota</taxon>
        <taxon>Actinomycetes</taxon>
        <taxon>Mycobacteriales</taxon>
        <taxon>Corynebacteriaceae</taxon>
        <taxon>Corynebacterium</taxon>
    </lineage>
</organism>